<gene>
    <name type="primary">yqfB</name>
    <name type="ordered locus">SPAB_03798</name>
</gene>
<keyword id="KW-0378">Hydrolase</keyword>
<comment type="function">
    <text evidence="2">Catalyzes the hydrolysis of N(4)-acetylcytidine (ac4C).</text>
</comment>
<comment type="catalytic activity">
    <reaction evidence="2">
        <text>N(4)-acetylcytidine + H2O = cytidine + acetate + H(+)</text>
        <dbReference type="Rhea" id="RHEA:62932"/>
        <dbReference type="ChEBI" id="CHEBI:15377"/>
        <dbReference type="ChEBI" id="CHEBI:15378"/>
        <dbReference type="ChEBI" id="CHEBI:17562"/>
        <dbReference type="ChEBI" id="CHEBI:30089"/>
        <dbReference type="ChEBI" id="CHEBI:70989"/>
        <dbReference type="EC" id="3.5.1.135"/>
    </reaction>
</comment>
<comment type="catalytic activity">
    <reaction evidence="2">
        <text>N(4)-acetyl-2'-deoxycytidine + H2O = 2'-deoxycytidine + acetate + H(+)</text>
        <dbReference type="Rhea" id="RHEA:62936"/>
        <dbReference type="ChEBI" id="CHEBI:15377"/>
        <dbReference type="ChEBI" id="CHEBI:15378"/>
        <dbReference type="ChEBI" id="CHEBI:15698"/>
        <dbReference type="ChEBI" id="CHEBI:30089"/>
        <dbReference type="ChEBI" id="CHEBI:146133"/>
        <dbReference type="EC" id="3.5.1.135"/>
    </reaction>
</comment>
<comment type="catalytic activity">
    <reaction evidence="2">
        <text>N(4)-acetylcytosine + H2O = cytosine + acetate + H(+)</text>
        <dbReference type="Rhea" id="RHEA:62940"/>
        <dbReference type="ChEBI" id="CHEBI:15377"/>
        <dbReference type="ChEBI" id="CHEBI:15378"/>
        <dbReference type="ChEBI" id="CHEBI:16040"/>
        <dbReference type="ChEBI" id="CHEBI:30089"/>
        <dbReference type="ChEBI" id="CHEBI:146134"/>
        <dbReference type="EC" id="3.5.1.135"/>
    </reaction>
</comment>
<comment type="similarity">
    <text evidence="2">Belongs to the N(4)-acetylcytidine amidohydrolase family.</text>
</comment>
<reference key="1">
    <citation type="submission" date="2007-11" db="EMBL/GenBank/DDBJ databases">
        <authorList>
            <consortium name="The Salmonella enterica serovar Paratyphi B Genome Sequencing Project"/>
            <person name="McClelland M."/>
            <person name="Sanderson E.K."/>
            <person name="Porwollik S."/>
            <person name="Spieth J."/>
            <person name="Clifton W.S."/>
            <person name="Fulton R."/>
            <person name="Cordes M."/>
            <person name="Wollam A."/>
            <person name="Shah N."/>
            <person name="Pepin K."/>
            <person name="Bhonagiri V."/>
            <person name="Nash W."/>
            <person name="Johnson M."/>
            <person name="Thiruvilangam P."/>
            <person name="Wilson R."/>
        </authorList>
    </citation>
    <scope>NUCLEOTIDE SEQUENCE [LARGE SCALE GENOMIC DNA]</scope>
    <source>
        <strain>ATCC BAA-1250 / SPB7</strain>
    </source>
</reference>
<accession>A9N3M7</accession>
<protein>
    <recommendedName>
        <fullName evidence="2">N(4)-acetylcytidine amidohydrolase</fullName>
        <shortName evidence="2">ac4C amidohydrolase</shortName>
        <ecNumber evidence="2">3.5.1.135</ecNumber>
    </recommendedName>
</protein>
<organism>
    <name type="scientific">Salmonella paratyphi B (strain ATCC BAA-1250 / SPB7)</name>
    <dbReference type="NCBI Taxonomy" id="1016998"/>
    <lineage>
        <taxon>Bacteria</taxon>
        <taxon>Pseudomonadati</taxon>
        <taxon>Pseudomonadota</taxon>
        <taxon>Gammaproteobacteria</taxon>
        <taxon>Enterobacterales</taxon>
        <taxon>Enterobacteriaceae</taxon>
        <taxon>Salmonella</taxon>
    </lineage>
</organism>
<sequence>MQPNDITFFQRFQNDILAGRKTITIRDASESHFKAGDVLRVGRFEDDGYFCTIEVTGTSTVTLDTLNEKHAQQENMSLDELKRVIAEIYPNQTQFYVIDFKCL</sequence>
<feature type="chain" id="PRO_1000083063" description="N(4)-acetylcytidine amidohydrolase">
    <location>
        <begin position="1"/>
        <end position="103"/>
    </location>
</feature>
<feature type="domain" description="ASCH" evidence="1">
    <location>
        <begin position="6"/>
        <end position="94"/>
    </location>
</feature>
<feature type="active site" description="Proton acceptor" evidence="2">
    <location>
        <position position="21"/>
    </location>
</feature>
<feature type="active site" description="Nucleophile" evidence="2">
    <location>
        <position position="24"/>
    </location>
</feature>
<feature type="active site" description="Proton donor" evidence="2">
    <location>
        <position position="74"/>
    </location>
</feature>
<proteinExistence type="inferred from homology"/>
<dbReference type="EC" id="3.5.1.135" evidence="2"/>
<dbReference type="EMBL" id="CP000886">
    <property type="protein sequence ID" value="ABX69130.1"/>
    <property type="molecule type" value="Genomic_DNA"/>
</dbReference>
<dbReference type="RefSeq" id="WP_001182976.1">
    <property type="nucleotide sequence ID" value="NC_010102.1"/>
</dbReference>
<dbReference type="SMR" id="A9N3M7"/>
<dbReference type="KEGG" id="spq:SPAB_03798"/>
<dbReference type="PATRIC" id="fig|1016998.12.peg.3579"/>
<dbReference type="HOGENOM" id="CLU_152586_0_0_6"/>
<dbReference type="BioCyc" id="SENT1016998:SPAB_RS15460-MONOMER"/>
<dbReference type="Proteomes" id="UP000008556">
    <property type="component" value="Chromosome"/>
</dbReference>
<dbReference type="GO" id="GO:0005829">
    <property type="term" value="C:cytosol"/>
    <property type="evidence" value="ECO:0007669"/>
    <property type="project" value="TreeGrafter"/>
</dbReference>
<dbReference type="GO" id="GO:0016813">
    <property type="term" value="F:hydrolase activity, acting on carbon-nitrogen (but not peptide) bonds, in linear amidines"/>
    <property type="evidence" value="ECO:0007669"/>
    <property type="project" value="UniProtKB-UniRule"/>
</dbReference>
<dbReference type="GO" id="GO:0106251">
    <property type="term" value="F:N4-acetylcytidine amidohydrolase activity"/>
    <property type="evidence" value="ECO:0007669"/>
    <property type="project" value="RHEA"/>
</dbReference>
<dbReference type="CDD" id="cd06552">
    <property type="entry name" value="ASCH_yqfb_like"/>
    <property type="match status" value="1"/>
</dbReference>
<dbReference type="FunFam" id="2.30.130.30:FF:000001">
    <property type="entry name" value="UPF0267 protein YqfB"/>
    <property type="match status" value="1"/>
</dbReference>
<dbReference type="Gene3D" id="2.30.130.30">
    <property type="entry name" value="Hypothetical protein"/>
    <property type="match status" value="1"/>
</dbReference>
<dbReference type="HAMAP" id="MF_00684">
    <property type="entry name" value="ac4C_amidohydr"/>
    <property type="match status" value="1"/>
</dbReference>
<dbReference type="InterPro" id="IPR008314">
    <property type="entry name" value="AC4CH"/>
</dbReference>
<dbReference type="InterPro" id="IPR007374">
    <property type="entry name" value="ASCH_domain"/>
</dbReference>
<dbReference type="InterPro" id="IPR015947">
    <property type="entry name" value="PUA-like_sf"/>
</dbReference>
<dbReference type="NCBIfam" id="NF003443">
    <property type="entry name" value="PRK04980.1"/>
    <property type="match status" value="1"/>
</dbReference>
<dbReference type="PANTHER" id="PTHR38088">
    <property type="entry name" value="UCP029143 FAMILY PROTEIN"/>
    <property type="match status" value="1"/>
</dbReference>
<dbReference type="PANTHER" id="PTHR38088:SF2">
    <property type="entry name" value="UCP029143 FAMILY PROTEIN"/>
    <property type="match status" value="1"/>
</dbReference>
<dbReference type="Pfam" id="PF04266">
    <property type="entry name" value="ASCH"/>
    <property type="match status" value="1"/>
</dbReference>
<dbReference type="PIRSF" id="PIRSF029143">
    <property type="entry name" value="UCP029143"/>
    <property type="match status" value="1"/>
</dbReference>
<dbReference type="SMART" id="SM01022">
    <property type="entry name" value="ASCH"/>
    <property type="match status" value="1"/>
</dbReference>
<dbReference type="SUPFAM" id="SSF88697">
    <property type="entry name" value="PUA domain-like"/>
    <property type="match status" value="1"/>
</dbReference>
<evidence type="ECO:0000255" key="1"/>
<evidence type="ECO:0000255" key="2">
    <source>
        <dbReference type="HAMAP-Rule" id="MF_00684"/>
    </source>
</evidence>
<name>AC4CH_SALPB</name>